<dbReference type="EC" id="2.7.10.1"/>
<dbReference type="EMBL" id="J05047">
    <property type="protein sequence ID" value="AAA37044.1"/>
    <property type="molecule type" value="Genomic_DNA"/>
</dbReference>
<dbReference type="PIR" id="A36502">
    <property type="entry name" value="A36502"/>
</dbReference>
<dbReference type="RefSeq" id="XP_003475448.1">
    <property type="nucleotide sequence ID" value="XM_003475400.2"/>
</dbReference>
<dbReference type="SMR" id="P14617"/>
<dbReference type="FunCoup" id="P14617">
    <property type="interactions" value="10"/>
</dbReference>
<dbReference type="STRING" id="10141.ENSCPOP00000002888"/>
<dbReference type="GlyCosmos" id="P14617">
    <property type="glycosylation" value="10 sites, No reported glycans"/>
</dbReference>
<dbReference type="Ensembl" id="ENSCPOT00000003232.3">
    <property type="protein sequence ID" value="ENSCPOP00000002888.2"/>
    <property type="gene ID" value="ENSCPOG00000003189.4"/>
</dbReference>
<dbReference type="GeneID" id="100716566"/>
<dbReference type="KEGG" id="cpoc:100716566"/>
<dbReference type="CTD" id="3645"/>
<dbReference type="VEuPathDB" id="HostDB:ENSCPOG00000003189"/>
<dbReference type="eggNOG" id="KOG1095">
    <property type="taxonomic scope" value="Eukaryota"/>
</dbReference>
<dbReference type="eggNOG" id="KOG4258">
    <property type="taxonomic scope" value="Eukaryota"/>
</dbReference>
<dbReference type="GeneTree" id="ENSGT00940000160437"/>
<dbReference type="HOGENOM" id="CLU_000288_166_0_1"/>
<dbReference type="InParanoid" id="P14617"/>
<dbReference type="OMA" id="IQRGHVY"/>
<dbReference type="OrthoDB" id="5809444at2759"/>
<dbReference type="BRENDA" id="2.7.10.1">
    <property type="organism ID" value="1225"/>
</dbReference>
<dbReference type="Proteomes" id="UP000005447">
    <property type="component" value="Unassembled WGS sequence"/>
</dbReference>
<dbReference type="Bgee" id="ENSCPOG00000003189">
    <property type="expression patterns" value="Expressed in adult mammalian kidney and 3 other cell types or tissues"/>
</dbReference>
<dbReference type="GO" id="GO:0030424">
    <property type="term" value="C:axon"/>
    <property type="evidence" value="ECO:0007669"/>
    <property type="project" value="TreeGrafter"/>
</dbReference>
<dbReference type="GO" id="GO:0005899">
    <property type="term" value="C:insulin receptor complex"/>
    <property type="evidence" value="ECO:0007669"/>
    <property type="project" value="TreeGrafter"/>
</dbReference>
<dbReference type="GO" id="GO:0005524">
    <property type="term" value="F:ATP binding"/>
    <property type="evidence" value="ECO:0007669"/>
    <property type="project" value="UniProtKB-KW"/>
</dbReference>
<dbReference type="GO" id="GO:0005009">
    <property type="term" value="F:insulin receptor activity"/>
    <property type="evidence" value="ECO:0007669"/>
    <property type="project" value="TreeGrafter"/>
</dbReference>
<dbReference type="GO" id="GO:0043560">
    <property type="term" value="F:insulin receptor substrate binding"/>
    <property type="evidence" value="ECO:0007669"/>
    <property type="project" value="InterPro"/>
</dbReference>
<dbReference type="GO" id="GO:0043548">
    <property type="term" value="F:phosphatidylinositol 3-kinase binding"/>
    <property type="evidence" value="ECO:0007669"/>
    <property type="project" value="InterPro"/>
</dbReference>
<dbReference type="GO" id="GO:0004714">
    <property type="term" value="F:transmembrane receptor protein tyrosine kinase activity"/>
    <property type="evidence" value="ECO:0000250"/>
    <property type="project" value="UniProtKB"/>
</dbReference>
<dbReference type="GO" id="GO:0030036">
    <property type="term" value="P:actin cytoskeleton organization"/>
    <property type="evidence" value="ECO:0000250"/>
    <property type="project" value="UniProtKB"/>
</dbReference>
<dbReference type="GO" id="GO:0071469">
    <property type="term" value="P:cellular response to alkaline pH"/>
    <property type="evidence" value="ECO:0000250"/>
    <property type="project" value="UniProtKB"/>
</dbReference>
<dbReference type="GO" id="GO:0030238">
    <property type="term" value="P:male sex determination"/>
    <property type="evidence" value="ECO:0007669"/>
    <property type="project" value="Ensembl"/>
</dbReference>
<dbReference type="GO" id="GO:0046777">
    <property type="term" value="P:protein autophosphorylation"/>
    <property type="evidence" value="ECO:0000250"/>
    <property type="project" value="UniProtKB"/>
</dbReference>
<dbReference type="CDD" id="cd00063">
    <property type="entry name" value="FN3"/>
    <property type="match status" value="3"/>
</dbReference>
<dbReference type="CDD" id="cd00064">
    <property type="entry name" value="FU"/>
    <property type="match status" value="1"/>
</dbReference>
<dbReference type="CDD" id="cd05032">
    <property type="entry name" value="PTKc_InsR_like"/>
    <property type="match status" value="1"/>
</dbReference>
<dbReference type="FunFam" id="1.10.510.10:FF:000050">
    <property type="entry name" value="Tyrosine-protein kinase receptor"/>
    <property type="match status" value="1"/>
</dbReference>
<dbReference type="FunFam" id="2.10.220.10:FF:000014">
    <property type="entry name" value="Tyrosine-protein kinase receptor"/>
    <property type="match status" value="1"/>
</dbReference>
<dbReference type="FunFam" id="2.60.40.10:FF:000087">
    <property type="entry name" value="Tyrosine-protein kinase receptor"/>
    <property type="match status" value="1"/>
</dbReference>
<dbReference type="FunFam" id="2.60.40.10:FF:000108">
    <property type="entry name" value="Tyrosine-protein kinase receptor"/>
    <property type="match status" value="1"/>
</dbReference>
<dbReference type="FunFam" id="3.30.200.20:FF:000026">
    <property type="entry name" value="Tyrosine-protein kinase receptor"/>
    <property type="match status" value="1"/>
</dbReference>
<dbReference type="FunFam" id="3.80.20.20:FF:000001">
    <property type="entry name" value="Tyrosine-protein kinase receptor"/>
    <property type="match status" value="1"/>
</dbReference>
<dbReference type="FunFam" id="3.80.20.20:FF:000002">
    <property type="entry name" value="Tyrosine-protein kinase receptor"/>
    <property type="match status" value="1"/>
</dbReference>
<dbReference type="Gene3D" id="2.10.220.10">
    <property type="entry name" value="Hormone Receptor, Insulin-like Growth Factor Receptor 1, Chain A, domain 2"/>
    <property type="match status" value="1"/>
</dbReference>
<dbReference type="Gene3D" id="2.60.40.10">
    <property type="entry name" value="Immunoglobulins"/>
    <property type="match status" value="4"/>
</dbReference>
<dbReference type="Gene3D" id="3.30.200.20">
    <property type="entry name" value="Phosphorylase Kinase, domain 1"/>
    <property type="match status" value="1"/>
</dbReference>
<dbReference type="Gene3D" id="3.80.20.20">
    <property type="entry name" value="Receptor L-domain"/>
    <property type="match status" value="2"/>
</dbReference>
<dbReference type="Gene3D" id="1.10.510.10">
    <property type="entry name" value="Transferase(Phosphotransferase) domain 1"/>
    <property type="match status" value="1"/>
</dbReference>
<dbReference type="InterPro" id="IPR003961">
    <property type="entry name" value="FN3_dom"/>
</dbReference>
<dbReference type="InterPro" id="IPR036116">
    <property type="entry name" value="FN3_sf"/>
</dbReference>
<dbReference type="InterPro" id="IPR006211">
    <property type="entry name" value="Furin-like_Cys-rich_dom"/>
</dbReference>
<dbReference type="InterPro" id="IPR006212">
    <property type="entry name" value="Furin_repeat"/>
</dbReference>
<dbReference type="InterPro" id="IPR009030">
    <property type="entry name" value="Growth_fac_rcpt_cys_sf"/>
</dbReference>
<dbReference type="InterPro" id="IPR013783">
    <property type="entry name" value="Ig-like_fold"/>
</dbReference>
<dbReference type="InterPro" id="IPR011009">
    <property type="entry name" value="Kinase-like_dom_sf"/>
</dbReference>
<dbReference type="InterPro" id="IPR000719">
    <property type="entry name" value="Prot_kinase_dom"/>
</dbReference>
<dbReference type="InterPro" id="IPR017441">
    <property type="entry name" value="Protein_kinase_ATP_BS"/>
</dbReference>
<dbReference type="InterPro" id="IPR000494">
    <property type="entry name" value="Rcpt_L-dom"/>
</dbReference>
<dbReference type="InterPro" id="IPR036941">
    <property type="entry name" value="Rcpt_L-dom_sf"/>
</dbReference>
<dbReference type="InterPro" id="IPR050122">
    <property type="entry name" value="RTK"/>
</dbReference>
<dbReference type="InterPro" id="IPR001245">
    <property type="entry name" value="Ser-Thr/Tyr_kinase_cat_dom"/>
</dbReference>
<dbReference type="InterPro" id="IPR008266">
    <property type="entry name" value="Tyr_kinase_AS"/>
</dbReference>
<dbReference type="InterPro" id="IPR020635">
    <property type="entry name" value="Tyr_kinase_cat_dom"/>
</dbReference>
<dbReference type="InterPro" id="IPR016246">
    <property type="entry name" value="Tyr_kinase_insulin-like_rcpt"/>
</dbReference>
<dbReference type="InterPro" id="IPR002011">
    <property type="entry name" value="Tyr_kinase_rcpt_2_CS"/>
</dbReference>
<dbReference type="PANTHER" id="PTHR24416:SF338">
    <property type="entry name" value="INSULIN RECEPTOR-RELATED PROTEIN"/>
    <property type="match status" value="1"/>
</dbReference>
<dbReference type="PANTHER" id="PTHR24416">
    <property type="entry name" value="TYROSINE-PROTEIN KINASE RECEPTOR"/>
    <property type="match status" value="1"/>
</dbReference>
<dbReference type="Pfam" id="PF00041">
    <property type="entry name" value="fn3"/>
    <property type="match status" value="1"/>
</dbReference>
<dbReference type="Pfam" id="PF00757">
    <property type="entry name" value="Furin-like"/>
    <property type="match status" value="1"/>
</dbReference>
<dbReference type="Pfam" id="PF07714">
    <property type="entry name" value="PK_Tyr_Ser-Thr"/>
    <property type="match status" value="1"/>
</dbReference>
<dbReference type="Pfam" id="PF01030">
    <property type="entry name" value="Recep_L_domain"/>
    <property type="match status" value="2"/>
</dbReference>
<dbReference type="PIRSF" id="PIRSF000620">
    <property type="entry name" value="Insulin_receptor"/>
    <property type="match status" value="1"/>
</dbReference>
<dbReference type="PRINTS" id="PR00109">
    <property type="entry name" value="TYRKINASE"/>
</dbReference>
<dbReference type="SMART" id="SM00060">
    <property type="entry name" value="FN3"/>
    <property type="match status" value="3"/>
</dbReference>
<dbReference type="SMART" id="SM00261">
    <property type="entry name" value="FU"/>
    <property type="match status" value="1"/>
</dbReference>
<dbReference type="SMART" id="SM00219">
    <property type="entry name" value="TyrKc"/>
    <property type="match status" value="1"/>
</dbReference>
<dbReference type="SUPFAM" id="SSF49265">
    <property type="entry name" value="Fibronectin type III"/>
    <property type="match status" value="3"/>
</dbReference>
<dbReference type="SUPFAM" id="SSF57184">
    <property type="entry name" value="Growth factor receptor domain"/>
    <property type="match status" value="1"/>
</dbReference>
<dbReference type="SUPFAM" id="SSF52058">
    <property type="entry name" value="L domain-like"/>
    <property type="match status" value="2"/>
</dbReference>
<dbReference type="SUPFAM" id="SSF56112">
    <property type="entry name" value="Protein kinase-like (PK-like)"/>
    <property type="match status" value="1"/>
</dbReference>
<dbReference type="PROSITE" id="PS50853">
    <property type="entry name" value="FN3"/>
    <property type="match status" value="3"/>
</dbReference>
<dbReference type="PROSITE" id="PS00107">
    <property type="entry name" value="PROTEIN_KINASE_ATP"/>
    <property type="match status" value="1"/>
</dbReference>
<dbReference type="PROSITE" id="PS50011">
    <property type="entry name" value="PROTEIN_KINASE_DOM"/>
    <property type="match status" value="1"/>
</dbReference>
<dbReference type="PROSITE" id="PS00109">
    <property type="entry name" value="PROTEIN_KINASE_TYR"/>
    <property type="match status" value="1"/>
</dbReference>
<dbReference type="PROSITE" id="PS00239">
    <property type="entry name" value="RECEPTOR_TYR_KIN_II"/>
    <property type="match status" value="1"/>
</dbReference>
<gene>
    <name type="primary">INSRR</name>
</gene>
<protein>
    <recommendedName>
        <fullName>Insulin receptor-related protein</fullName>
        <shortName>IRR</shortName>
        <ecNumber>2.7.10.1</ecNumber>
    </recommendedName>
    <alternativeName>
        <fullName>IR-related receptor</fullName>
    </alternativeName>
    <component>
        <recommendedName>
            <fullName>Insulin receptor-related protein alpha chain</fullName>
        </recommendedName>
    </component>
    <component>
        <recommendedName>
            <fullName>Insulin receptor-related protein beta chain</fullName>
        </recommendedName>
    </component>
</protein>
<comment type="function">
    <text evidence="1">Receptor with tyrosine-protein kinase activity. Functions as a pH sensing receptor which is activated by increased extracellular pH. Activates an intracellular signaling pathway that involves IRS1 and AKT1/PKB (By similarity).</text>
</comment>
<comment type="catalytic activity">
    <reaction evidence="5">
        <text>L-tyrosyl-[protein] + ATP = O-phospho-L-tyrosyl-[protein] + ADP + H(+)</text>
        <dbReference type="Rhea" id="RHEA:10596"/>
        <dbReference type="Rhea" id="RHEA-COMP:10136"/>
        <dbReference type="Rhea" id="RHEA-COMP:20101"/>
        <dbReference type="ChEBI" id="CHEBI:15378"/>
        <dbReference type="ChEBI" id="CHEBI:30616"/>
        <dbReference type="ChEBI" id="CHEBI:46858"/>
        <dbReference type="ChEBI" id="CHEBI:61978"/>
        <dbReference type="ChEBI" id="CHEBI:456216"/>
        <dbReference type="EC" id="2.7.10.1"/>
    </reaction>
</comment>
<comment type="subunit">
    <text>Probable tetramer of 2 alpha and 2 beta chains linked by disulfide bonds. The alpha chains contribute to the formation of the ligand-binding domain, while the beta chains carry the kinase domain.</text>
</comment>
<comment type="subcellular location">
    <subcellularLocation>
        <location evidence="1">Membrane</location>
        <topology evidence="1">Single-pass type I membrane protein</topology>
    </subcellularLocation>
</comment>
<comment type="domain">
    <text evidence="1">The extracellular domain is required for sensing alterations in external pH.</text>
</comment>
<comment type="PTM">
    <text evidence="1">Autophosphorylated on tyrosine residues between pH 7.9 and pH 10.5.</text>
</comment>
<comment type="similarity">
    <text evidence="3">Belongs to the protein kinase superfamily. Tyr protein kinase family. Insulin receptor subfamily.</text>
</comment>
<keyword id="KW-0067">ATP-binding</keyword>
<keyword id="KW-0165">Cleavage on pair of basic residues</keyword>
<keyword id="KW-1015">Disulfide bond</keyword>
<keyword id="KW-0325">Glycoprotein</keyword>
<keyword id="KW-0418">Kinase</keyword>
<keyword id="KW-0472">Membrane</keyword>
<keyword id="KW-0547">Nucleotide-binding</keyword>
<keyword id="KW-0597">Phosphoprotein</keyword>
<keyword id="KW-0675">Receptor</keyword>
<keyword id="KW-1185">Reference proteome</keyword>
<keyword id="KW-0677">Repeat</keyword>
<keyword id="KW-0732">Signal</keyword>
<keyword id="KW-0808">Transferase</keyword>
<keyword id="KW-0812">Transmembrane</keyword>
<keyword id="KW-1133">Transmembrane helix</keyword>
<keyword id="KW-0829">Tyrosine-protein kinase</keyword>
<organism>
    <name type="scientific">Cavia porcellus</name>
    <name type="common">Guinea pig</name>
    <dbReference type="NCBI Taxonomy" id="10141"/>
    <lineage>
        <taxon>Eukaryota</taxon>
        <taxon>Metazoa</taxon>
        <taxon>Chordata</taxon>
        <taxon>Craniata</taxon>
        <taxon>Vertebrata</taxon>
        <taxon>Euteleostomi</taxon>
        <taxon>Mammalia</taxon>
        <taxon>Eutheria</taxon>
        <taxon>Euarchontoglires</taxon>
        <taxon>Glires</taxon>
        <taxon>Rodentia</taxon>
        <taxon>Hystricomorpha</taxon>
        <taxon>Caviidae</taxon>
        <taxon>Cavia</taxon>
    </lineage>
</organism>
<accession>P14617</accession>
<proteinExistence type="inferred from homology"/>
<reference key="1">
    <citation type="journal article" date="1989" name="J. Biol. Chem.">
        <title>Primary structure of a putative receptor for a ligand of the insulin family.</title>
        <authorList>
            <person name="Shier P."/>
            <person name="Watt V.M."/>
        </authorList>
    </citation>
    <scope>NUCLEOTIDE SEQUENCE [GENOMIC DNA]</scope>
</reference>
<evidence type="ECO:0000250" key="1"/>
<evidence type="ECO:0000255" key="2"/>
<evidence type="ECO:0000255" key="3">
    <source>
        <dbReference type="PROSITE-ProRule" id="PRU00159"/>
    </source>
</evidence>
<evidence type="ECO:0000255" key="4">
    <source>
        <dbReference type="PROSITE-ProRule" id="PRU00316"/>
    </source>
</evidence>
<evidence type="ECO:0000255" key="5">
    <source>
        <dbReference type="PROSITE-ProRule" id="PRU10028"/>
    </source>
</evidence>
<evidence type="ECO:0000256" key="6">
    <source>
        <dbReference type="SAM" id="MobiDB-lite"/>
    </source>
</evidence>
<evidence type="ECO:0000305" key="7"/>
<name>INSRR_CAVPO</name>
<sequence>MARPKLWPWGILLLVSLLSAGFNLDTMNVCPSLDIRSEVAELRRLENCSVVEGHLQILLMFTATGEDFRSLSFPHLTQVTDYLLLFRVYGLESLRDLFPNLAVIRGAHLFLGYALVIFEMPHLRDVGLPALGAVLHGSVRVEKNQELCHLSTIDWGLLQPTPSTNYIVGNKLGEECADVCPGTLGAAGEPCARTTFNGHTDYRCWTSSHCQRVCPCPQGLACTISGECCHTECLGGCSQPEDPRACVACRHFYYQSACHRACPLGTYEHESWRCVTAESCANLRSVPGRASTFGIHQGKCLAQCPPGFTRNGSSIFCHKCEGLCPKECKVGTKTIDSVQAAQDLVGCTHVEGSLILNLRRGYNLEPELQRSLGLVETITGFLKIKHSFALVSLSFFKNLKLIRGDTMVDGNYTLYVLDNQNLQQLGPWVSAGLTIPVGKIYFAFNPRLCLEHIYRLEEVTGTRGRQNKAEINPRTNGDRAACQTRTLRFVSNVTEADRILLRWERYEPLEARDLLSFIVYYKESPFQNATEHVGPDACGSQSWNLLDVELPLSRTQEPGVILAPLKPWTQYAVFVRAITLTTAEDSPHQGAQSPIVYLWTLPAAPTVPQDVISSSNSSSHLLVRWKPPTQRNGNITYYLVLWQRLAEDGDLYLNDYCHRGLRLPTSNHDPRFDREDGDLEAELELGCCPCQHAPPGQVLPALEAQEASFQKKFENFLHNAITIPKPPWKVTSIHRNLQRDAGRHRRAIGSPRPGGNSSDFEIQEDKVPRERAVLGGLRHFTEYRIDIHACNHAAHIVGCSAATFVFARTMPRREADDIPGKLSWEAASKSSVLLRWFEPPDPNGLILKYEIKYRRLGEEATVLCVSRLRYAKVGGVQLALLPPGNYSARVRATSLAGNGSWTDSVAFYIPGPEEEDSGGLHILLTVTPAGLMLLIILAALGFFYSRKRNGTLYTSVNPEYLSASDMYIPDEWEVPREQISIIRELGQGSFGMVYEGVAKGLEAGEESTPVALKTVNELASPRERIEFLKEASVMKAFQCHHVVRLLGVVSQGQPTLVIMELMTRGDLKSHLRSLRPEAENNPGIPRPALGDMIQMAGEIADGMAYLAANKFVHRDLAARNCMVSQDFTVKIGDFGMTRDVYETDYYRKGGKGLLPVRWMAPESLKDGIFTTHSDVWSFGVVLWEIVTLAEQPYQGLSNEQVLKFVMDGGVLEELEDCPHQLQELMSSCWQQNPRLRPTFTQILNSIQKELRPSFRLLSFYHSPECQGGCGLQPTTDAESSSPPTSKGASDCSLQNGGPEH</sequence>
<feature type="signal peptide">
    <location>
        <begin position="1"/>
        <end position="26"/>
    </location>
</feature>
<feature type="chain" id="PRO_0000016699" description="Insulin receptor-related protein alpha chain" evidence="7">
    <location>
        <begin position="27"/>
        <end position="746"/>
    </location>
</feature>
<feature type="chain" id="PRO_0000016700" description="Insulin receptor-related protein beta chain" evidence="7">
    <location>
        <begin position="747"/>
        <end position="1300"/>
    </location>
</feature>
<feature type="topological domain" description="Extracellular" evidence="2">
    <location>
        <begin position="747"/>
        <end position="921"/>
    </location>
</feature>
<feature type="transmembrane region" description="Helical" evidence="2">
    <location>
        <begin position="922"/>
        <end position="943"/>
    </location>
</feature>
<feature type="topological domain" description="Cytoplasmic" evidence="2">
    <location>
        <begin position="944"/>
        <end position="1300"/>
    </location>
</feature>
<feature type="domain" description="Fibronectin type-III 1" evidence="4">
    <location>
        <begin position="483"/>
        <end position="603"/>
    </location>
</feature>
<feature type="domain" description="Fibronectin type-III 2" evidence="4">
    <location>
        <begin position="607"/>
        <end position="707"/>
    </location>
</feature>
<feature type="domain" description="Fibronectin type-III 3" evidence="4">
    <location>
        <begin position="818"/>
        <end position="912"/>
    </location>
</feature>
<feature type="domain" description="Protein kinase" evidence="3">
    <location>
        <begin position="979"/>
        <end position="1254"/>
    </location>
</feature>
<feature type="region of interest" description="Disordered" evidence="6">
    <location>
        <begin position="740"/>
        <end position="762"/>
    </location>
</feature>
<feature type="region of interest" description="Disordered" evidence="6">
    <location>
        <begin position="1270"/>
        <end position="1300"/>
    </location>
</feature>
<feature type="compositionally biased region" description="Polar residues" evidence="6">
    <location>
        <begin position="1272"/>
        <end position="1300"/>
    </location>
</feature>
<feature type="active site" description="Proton acceptor" evidence="3 5">
    <location>
        <position position="1115"/>
    </location>
</feature>
<feature type="binding site" evidence="3">
    <location>
        <begin position="985"/>
        <end position="993"/>
    </location>
    <ligand>
        <name>ATP</name>
        <dbReference type="ChEBI" id="CHEBI:30616"/>
    </ligand>
</feature>
<feature type="binding site">
    <location>
        <position position="1013"/>
    </location>
    <ligand>
        <name>ATP</name>
        <dbReference type="ChEBI" id="CHEBI:30616"/>
    </ligand>
</feature>
<feature type="modified residue" description="Phosphotyrosine; by autocatalysis" evidence="1">
    <location>
        <position position="1145"/>
    </location>
</feature>
<feature type="modified residue" description="Phosphotyrosine; by autocatalysis" evidence="1">
    <location>
        <position position="1146"/>
    </location>
</feature>
<feature type="glycosylation site" description="N-linked (GlcNAc...) asparagine" evidence="2">
    <location>
        <position position="47"/>
    </location>
</feature>
<feature type="glycosylation site" description="N-linked (GlcNAc...) asparagine" evidence="2">
    <location>
        <position position="311"/>
    </location>
</feature>
<feature type="glycosylation site" description="N-linked (GlcNAc...) asparagine" evidence="2">
    <location>
        <position position="411"/>
    </location>
</feature>
<feature type="glycosylation site" description="N-linked (GlcNAc...) asparagine" evidence="2">
    <location>
        <position position="492"/>
    </location>
</feature>
<feature type="glycosylation site" description="N-linked (GlcNAc...) asparagine" evidence="2">
    <location>
        <position position="528"/>
    </location>
</feature>
<feature type="glycosylation site" description="N-linked (GlcNAc...) asparagine" evidence="2">
    <location>
        <position position="616"/>
    </location>
</feature>
<feature type="glycosylation site" description="N-linked (GlcNAc...) asparagine" evidence="2">
    <location>
        <position position="634"/>
    </location>
</feature>
<feature type="glycosylation site" description="N-linked (GlcNAc...) asparagine" evidence="2">
    <location>
        <position position="756"/>
    </location>
</feature>
<feature type="glycosylation site" description="N-linked (GlcNAc...) asparagine" evidence="2">
    <location>
        <position position="885"/>
    </location>
</feature>
<feature type="glycosylation site" description="N-linked (GlcNAc...) asparagine" evidence="2">
    <location>
        <position position="898"/>
    </location>
</feature>
<feature type="disulfide bond" evidence="1">
    <location>
        <begin position="214"/>
        <end position="222"/>
    </location>
</feature>
<feature type="disulfide bond" evidence="1">
    <location>
        <begin position="216"/>
        <end position="228"/>
    </location>
</feature>
<feature type="disulfide bond" evidence="1">
    <location>
        <begin position="229"/>
        <end position="237"/>
    </location>
</feature>
<feature type="disulfide bond" evidence="1">
    <location>
        <begin position="233"/>
        <end position="246"/>
    </location>
</feature>
<feature type="disulfide bond" evidence="1">
    <location>
        <begin position="249"/>
        <end position="258"/>
    </location>
</feature>
<feature type="disulfide bond" evidence="1">
    <location>
        <begin position="262"/>
        <end position="274"/>
    </location>
</feature>
<feature type="disulfide bond" evidence="1">
    <location>
        <begin position="280"/>
        <end position="300"/>
    </location>
</feature>
<feature type="disulfide bond" evidence="1">
    <location>
        <begin position="304"/>
        <end position="317"/>
    </location>
</feature>
<feature type="disulfide bond" evidence="1">
    <location>
        <begin position="320"/>
        <end position="324"/>
    </location>
</feature>
<feature type="disulfide bond" description="Interchain (between alpha and beta chains)" evidence="2">
    <location>
        <begin position="657"/>
        <end position="864"/>
    </location>
</feature>